<sequence length="226" mass="25214">MEAEGRREQGKPRKGRVCSSLWPEGYPAAGTLTARVDISTRPYRNLSGVGAGRPRLSPQGGQRGRPHSRRRHRTTFSPAQLEQLESAFGRNQYPDIWAREGLARDTGLSEARIQVWFQNRRAKQRKQERSLLQPLAHLSPATFSGFLPEPPACPYSYPTPPPPMTCFPHPYNHALPSQPSTGGSFARHPQSEDWYPTLHPTPTGHLPCPPAPPVLPLSLEPPKSWN</sequence>
<proteinExistence type="evidence at transcript level"/>
<feature type="chain" id="PRO_0000049273" description="Homeobox protein prophet of Pit-1">
    <location>
        <begin position="1"/>
        <end position="226"/>
    </location>
</feature>
<feature type="DNA-binding region" description="Homeobox" evidence="2">
    <location>
        <begin position="69"/>
        <end position="128"/>
    </location>
</feature>
<feature type="region of interest" description="Disordered" evidence="3">
    <location>
        <begin position="1"/>
        <end position="77"/>
    </location>
</feature>
<feature type="region of interest" description="Disordered" evidence="3">
    <location>
        <begin position="175"/>
        <end position="226"/>
    </location>
</feature>
<feature type="compositionally biased region" description="Basic and acidic residues" evidence="3">
    <location>
        <begin position="1"/>
        <end position="11"/>
    </location>
</feature>
<feature type="compositionally biased region" description="Basic residues" evidence="3">
    <location>
        <begin position="64"/>
        <end position="74"/>
    </location>
</feature>
<feature type="compositionally biased region" description="Low complexity" evidence="3">
    <location>
        <begin position="196"/>
        <end position="206"/>
    </location>
</feature>
<feature type="compositionally biased region" description="Low complexity" evidence="3">
    <location>
        <begin position="216"/>
        <end position="226"/>
    </location>
</feature>
<evidence type="ECO:0000250" key="1"/>
<evidence type="ECO:0000255" key="2">
    <source>
        <dbReference type="PROSITE-ProRule" id="PRU00108"/>
    </source>
</evidence>
<evidence type="ECO:0000256" key="3">
    <source>
        <dbReference type="SAM" id="MobiDB-lite"/>
    </source>
</evidence>
<evidence type="ECO:0000305" key="4"/>
<accession>Q9GLL9</accession>
<accession>A2IBI2</accession>
<accession>Q5TLE9</accession>
<comment type="function">
    <text evidence="1">Possibly involved in the ontogenesis of pituitary gonadotropes, as well as somatotropes, lactotropes and caudomedial thyrotropes.</text>
</comment>
<comment type="subcellular location">
    <subcellularLocation>
        <location evidence="2">Nucleus</location>
    </subcellularLocation>
</comment>
<comment type="tissue specificity">
    <text>Exclusively expressed in the developing pituitary gland.</text>
</comment>
<comment type="similarity">
    <text evidence="4">Belongs to the paired homeobox family.</text>
</comment>
<dbReference type="EMBL" id="AF232676">
    <property type="protein sequence ID" value="AAG33702.1"/>
    <property type="molecule type" value="mRNA"/>
</dbReference>
<dbReference type="EMBL" id="AB187272">
    <property type="protein sequence ID" value="BAD72766.1"/>
    <property type="molecule type" value="mRNA"/>
</dbReference>
<dbReference type="EMBL" id="EF188259">
    <property type="protein sequence ID" value="ABM63375.1"/>
    <property type="molecule type" value="Genomic_DNA"/>
</dbReference>
<dbReference type="RefSeq" id="NP_001001263.1">
    <property type="nucleotide sequence ID" value="NM_001001263.1"/>
</dbReference>
<dbReference type="SMR" id="Q9GLL9"/>
<dbReference type="FunCoup" id="Q9GLL9">
    <property type="interactions" value="237"/>
</dbReference>
<dbReference type="STRING" id="9823.ENSSSCP00000022383"/>
<dbReference type="GlyGen" id="Q9GLL9">
    <property type="glycosylation" value="1 site"/>
</dbReference>
<dbReference type="PaxDb" id="9823-ENSSSCP00000022383"/>
<dbReference type="Ensembl" id="ENSSSCT00000028015.2">
    <property type="protein sequence ID" value="ENSSSCP00000022383.1"/>
    <property type="gene ID" value="ENSSSCG00000029569.2"/>
</dbReference>
<dbReference type="Ensembl" id="ENSSSCT00015083267.1">
    <property type="protein sequence ID" value="ENSSSCP00015033696.1"/>
    <property type="gene ID" value="ENSSSCG00015062296.1"/>
</dbReference>
<dbReference type="Ensembl" id="ENSSSCT00025091153.1">
    <property type="protein sequence ID" value="ENSSSCP00025039960.1"/>
    <property type="gene ID" value="ENSSSCG00025066385.1"/>
</dbReference>
<dbReference type="Ensembl" id="ENSSSCT00030029731.1">
    <property type="protein sequence ID" value="ENSSSCP00030013348.1"/>
    <property type="gene ID" value="ENSSSCG00030021434.1"/>
</dbReference>
<dbReference type="Ensembl" id="ENSSSCT00035031245.1">
    <property type="protein sequence ID" value="ENSSSCP00035012233.1"/>
    <property type="gene ID" value="ENSSSCG00035023806.1"/>
</dbReference>
<dbReference type="Ensembl" id="ENSSSCT00040059341.1">
    <property type="protein sequence ID" value="ENSSSCP00040024888.1"/>
    <property type="gene ID" value="ENSSSCG00040044247.1"/>
</dbReference>
<dbReference type="Ensembl" id="ENSSSCT00045066927.1">
    <property type="protein sequence ID" value="ENSSSCP00045047514.1"/>
    <property type="gene ID" value="ENSSSCG00045038575.1"/>
</dbReference>
<dbReference type="Ensembl" id="ENSSSCT00050060271.1">
    <property type="protein sequence ID" value="ENSSSCP00050025916.1"/>
    <property type="gene ID" value="ENSSSCG00050044271.1"/>
</dbReference>
<dbReference type="Ensembl" id="ENSSSCT00055023072.1">
    <property type="protein sequence ID" value="ENSSSCP00055018245.1"/>
    <property type="gene ID" value="ENSSSCG00055011786.1"/>
</dbReference>
<dbReference type="Ensembl" id="ENSSSCT00060089889.1">
    <property type="protein sequence ID" value="ENSSSCP00060038935.1"/>
    <property type="gene ID" value="ENSSSCG00060065803.1"/>
</dbReference>
<dbReference type="Ensembl" id="ENSSSCT00065029335.1">
    <property type="protein sequence ID" value="ENSSSCP00065011977.1"/>
    <property type="gene ID" value="ENSSSCG00065022055.1"/>
</dbReference>
<dbReference type="Ensembl" id="ENSSSCT00070054315.1">
    <property type="protein sequence ID" value="ENSSSCP00070046057.1"/>
    <property type="gene ID" value="ENSSSCG00070027089.1"/>
</dbReference>
<dbReference type="Ensembl" id="ENSSSCT00105064389">
    <property type="protein sequence ID" value="ENSSSCP00105045809"/>
    <property type="gene ID" value="ENSSSCG00105033784"/>
</dbReference>
<dbReference type="Ensembl" id="ENSSSCT00110028082">
    <property type="protein sequence ID" value="ENSSSCP00110018728"/>
    <property type="gene ID" value="ENSSSCG00110014844"/>
</dbReference>
<dbReference type="Ensembl" id="ENSSSCT00115037531">
    <property type="protein sequence ID" value="ENSSSCP00115035461"/>
    <property type="gene ID" value="ENSSSCG00115021178"/>
</dbReference>
<dbReference type="Ensembl" id="ENSSSCT00130072911">
    <property type="protein sequence ID" value="ENSSSCP00130052589"/>
    <property type="gene ID" value="ENSSSCG00130037329"/>
</dbReference>
<dbReference type="GeneID" id="397280"/>
<dbReference type="KEGG" id="ssc:397280"/>
<dbReference type="CTD" id="5626"/>
<dbReference type="VGNC" id="VGNC:91834">
    <property type="gene designation" value="PROP1"/>
</dbReference>
<dbReference type="eggNOG" id="KOG0490">
    <property type="taxonomic scope" value="Eukaryota"/>
</dbReference>
<dbReference type="GeneTree" id="ENSGT00940000162292"/>
<dbReference type="HOGENOM" id="CLU_044912_1_0_1"/>
<dbReference type="InParanoid" id="Q9GLL9"/>
<dbReference type="OMA" id="LWPEGYP"/>
<dbReference type="OrthoDB" id="6159439at2759"/>
<dbReference type="TreeFam" id="TF315976"/>
<dbReference type="Proteomes" id="UP000008227">
    <property type="component" value="Chromosome 2"/>
</dbReference>
<dbReference type="Proteomes" id="UP000314985">
    <property type="component" value="Chromosome 2"/>
</dbReference>
<dbReference type="Proteomes" id="UP000694570">
    <property type="component" value="Unplaced"/>
</dbReference>
<dbReference type="Proteomes" id="UP000694571">
    <property type="component" value="Unplaced"/>
</dbReference>
<dbReference type="Proteomes" id="UP000694720">
    <property type="component" value="Unplaced"/>
</dbReference>
<dbReference type="Proteomes" id="UP000694722">
    <property type="component" value="Unplaced"/>
</dbReference>
<dbReference type="Proteomes" id="UP000694723">
    <property type="component" value="Unplaced"/>
</dbReference>
<dbReference type="Proteomes" id="UP000694724">
    <property type="component" value="Unplaced"/>
</dbReference>
<dbReference type="Proteomes" id="UP000694725">
    <property type="component" value="Unplaced"/>
</dbReference>
<dbReference type="Proteomes" id="UP000694726">
    <property type="component" value="Unplaced"/>
</dbReference>
<dbReference type="Proteomes" id="UP000694727">
    <property type="component" value="Unplaced"/>
</dbReference>
<dbReference type="Proteomes" id="UP000694728">
    <property type="component" value="Unplaced"/>
</dbReference>
<dbReference type="Bgee" id="ENSSSCG00000029569">
    <property type="expression patterns" value="Expressed in oocyte and 5 other cell types or tissues"/>
</dbReference>
<dbReference type="ExpressionAtlas" id="Q9GLL9">
    <property type="expression patterns" value="baseline"/>
</dbReference>
<dbReference type="GO" id="GO:0005634">
    <property type="term" value="C:nucleus"/>
    <property type="evidence" value="ECO:0007669"/>
    <property type="project" value="UniProtKB-SubCell"/>
</dbReference>
<dbReference type="GO" id="GO:0005667">
    <property type="term" value="C:transcription regulator complex"/>
    <property type="evidence" value="ECO:0000318"/>
    <property type="project" value="GO_Central"/>
</dbReference>
<dbReference type="GO" id="GO:0000981">
    <property type="term" value="F:DNA-binding transcription factor activity, RNA polymerase II-specific"/>
    <property type="evidence" value="ECO:0000318"/>
    <property type="project" value="GO_Central"/>
</dbReference>
<dbReference type="GO" id="GO:0000978">
    <property type="term" value="F:RNA polymerase II cis-regulatory region sequence-specific DNA binding"/>
    <property type="evidence" value="ECO:0000318"/>
    <property type="project" value="GO_Central"/>
</dbReference>
<dbReference type="GO" id="GO:0021983">
    <property type="term" value="P:pituitary gland development"/>
    <property type="evidence" value="ECO:0007669"/>
    <property type="project" value="InterPro"/>
</dbReference>
<dbReference type="GO" id="GO:0006357">
    <property type="term" value="P:regulation of transcription by RNA polymerase II"/>
    <property type="evidence" value="ECO:0000318"/>
    <property type="project" value="GO_Central"/>
</dbReference>
<dbReference type="CDD" id="cd00086">
    <property type="entry name" value="homeodomain"/>
    <property type="match status" value="1"/>
</dbReference>
<dbReference type="FunFam" id="1.10.10.60:FF:000138">
    <property type="entry name" value="Homeobox protein prophet of Pit-1"/>
    <property type="match status" value="1"/>
</dbReference>
<dbReference type="Gene3D" id="1.10.10.60">
    <property type="entry name" value="Homeodomain-like"/>
    <property type="match status" value="1"/>
</dbReference>
<dbReference type="InterPro" id="IPR001356">
    <property type="entry name" value="HD"/>
</dbReference>
<dbReference type="InterPro" id="IPR017970">
    <property type="entry name" value="Homeobox_CS"/>
</dbReference>
<dbReference type="InterPro" id="IPR009057">
    <property type="entry name" value="Homeodomain-like_sf"/>
</dbReference>
<dbReference type="InterPro" id="IPR042412">
    <property type="entry name" value="PROP1"/>
</dbReference>
<dbReference type="PANTHER" id="PTHR47409">
    <property type="entry name" value="HOMEOBOX PROTEIN PROPHET OF PIT-1"/>
    <property type="match status" value="1"/>
</dbReference>
<dbReference type="PANTHER" id="PTHR47409:SF1">
    <property type="entry name" value="HOMEOBOX PROTEIN PROPHET OF PIT-1"/>
    <property type="match status" value="1"/>
</dbReference>
<dbReference type="Pfam" id="PF00046">
    <property type="entry name" value="Homeodomain"/>
    <property type="match status" value="1"/>
</dbReference>
<dbReference type="SMART" id="SM00389">
    <property type="entry name" value="HOX"/>
    <property type="match status" value="1"/>
</dbReference>
<dbReference type="SUPFAM" id="SSF46689">
    <property type="entry name" value="Homeodomain-like"/>
    <property type="match status" value="1"/>
</dbReference>
<dbReference type="PROSITE" id="PS00027">
    <property type="entry name" value="HOMEOBOX_1"/>
    <property type="match status" value="1"/>
</dbReference>
<dbReference type="PROSITE" id="PS50071">
    <property type="entry name" value="HOMEOBOX_2"/>
    <property type="match status" value="1"/>
</dbReference>
<gene>
    <name type="primary">PROP1</name>
</gene>
<reference key="1">
    <citation type="journal article" date="2000" name="Mol. Cell. Endocrinol.">
        <title>Biochemical and genetic characterization of the porcine Prophet of Pit-1 pituitary transcription factor.</title>
        <authorList>
            <person name="Sloop K.W."/>
            <person name="McCutchan Schiller A."/>
            <person name="Smith T.P.L."/>
            <person name="Blanton J.R. Jr."/>
            <person name="Rohrer G.A."/>
            <person name="Meier B.C."/>
            <person name="Rhodes S.J."/>
        </authorList>
    </citation>
    <scope>NUCLEOTIDE SEQUENCE [MRNA]</scope>
</reference>
<reference key="2">
    <citation type="journal article" date="2004" name="Biochem. Biophys. Res. Commun.">
        <title>Pituitary transcription factor Prop-1 stimulates porcine follicle-stimulating hormone beta subunit gene expression.</title>
        <authorList>
            <person name="Aikawa S."/>
            <person name="Kato T."/>
            <person name="Susa T."/>
            <person name="Tomizawa K."/>
            <person name="Ogawa S."/>
            <person name="Kato Y."/>
        </authorList>
    </citation>
    <scope>NUCLEOTIDE SEQUENCE [MRNA]</scope>
    <source>
        <tissue>Pituitary anterior lobe</tissue>
    </source>
</reference>
<reference key="3">
    <citation type="submission" date="2006-12" db="EMBL/GenBank/DDBJ databases">
        <title>Cloning and sequence analysis of Prop1 gene in WuZhiShan pig.</title>
        <authorList>
            <person name="Heng W.N."/>
            <person name="Guo C.H."/>
        </authorList>
    </citation>
    <scope>NUCLEOTIDE SEQUENCE [GENOMIC DNA]</scope>
</reference>
<organism>
    <name type="scientific">Sus scrofa</name>
    <name type="common">Pig</name>
    <dbReference type="NCBI Taxonomy" id="9823"/>
    <lineage>
        <taxon>Eukaryota</taxon>
        <taxon>Metazoa</taxon>
        <taxon>Chordata</taxon>
        <taxon>Craniata</taxon>
        <taxon>Vertebrata</taxon>
        <taxon>Euteleostomi</taxon>
        <taxon>Mammalia</taxon>
        <taxon>Eutheria</taxon>
        <taxon>Laurasiatheria</taxon>
        <taxon>Artiodactyla</taxon>
        <taxon>Suina</taxon>
        <taxon>Suidae</taxon>
        <taxon>Sus</taxon>
    </lineage>
</organism>
<keyword id="KW-0238">DNA-binding</keyword>
<keyword id="KW-0371">Homeobox</keyword>
<keyword id="KW-0539">Nucleus</keyword>
<keyword id="KW-1185">Reference proteome</keyword>
<name>PROP1_PIG</name>
<protein>
    <recommendedName>
        <fullName>Homeobox protein prophet of Pit-1</fullName>
        <shortName>PROP-1</shortName>
    </recommendedName>
    <alternativeName>
        <fullName>Pituitary-specific homeodomain factor</fullName>
    </alternativeName>
</protein>